<reference key="1">
    <citation type="journal article" date="2002" name="Nature">
        <title>Sequence and analysis of chromosome 2 of Dictyostelium discoideum.</title>
        <authorList>
            <person name="Gloeckner G."/>
            <person name="Eichinger L."/>
            <person name="Szafranski K."/>
            <person name="Pachebat J.A."/>
            <person name="Bankier A.T."/>
            <person name="Dear P.H."/>
            <person name="Lehmann R."/>
            <person name="Baumgart C."/>
            <person name="Parra G."/>
            <person name="Abril J.F."/>
            <person name="Guigo R."/>
            <person name="Kumpf K."/>
            <person name="Tunggal B."/>
            <person name="Cox E.C."/>
            <person name="Quail M.A."/>
            <person name="Platzer M."/>
            <person name="Rosenthal A."/>
            <person name="Noegel A.A."/>
        </authorList>
    </citation>
    <scope>NUCLEOTIDE SEQUENCE [LARGE SCALE GENOMIC DNA]</scope>
    <source>
        <strain>AX4</strain>
    </source>
</reference>
<reference key="2">
    <citation type="journal article" date="2005" name="Nature">
        <title>The genome of the social amoeba Dictyostelium discoideum.</title>
        <authorList>
            <person name="Eichinger L."/>
            <person name="Pachebat J.A."/>
            <person name="Gloeckner G."/>
            <person name="Rajandream M.A."/>
            <person name="Sucgang R."/>
            <person name="Berriman M."/>
            <person name="Song J."/>
            <person name="Olsen R."/>
            <person name="Szafranski K."/>
            <person name="Xu Q."/>
            <person name="Tunggal B."/>
            <person name="Kummerfeld S."/>
            <person name="Madera M."/>
            <person name="Konfortov B.A."/>
            <person name="Rivero F."/>
            <person name="Bankier A.T."/>
            <person name="Lehmann R."/>
            <person name="Hamlin N."/>
            <person name="Davies R."/>
            <person name="Gaudet P."/>
            <person name="Fey P."/>
            <person name="Pilcher K."/>
            <person name="Chen G."/>
            <person name="Saunders D."/>
            <person name="Sodergren E.J."/>
            <person name="Davis P."/>
            <person name="Kerhornou A."/>
            <person name="Nie X."/>
            <person name="Hall N."/>
            <person name="Anjard C."/>
            <person name="Hemphill L."/>
            <person name="Bason N."/>
            <person name="Farbrother P."/>
            <person name="Desany B."/>
            <person name="Just E."/>
            <person name="Morio T."/>
            <person name="Rost R."/>
            <person name="Churcher C.M."/>
            <person name="Cooper J."/>
            <person name="Haydock S."/>
            <person name="van Driessche N."/>
            <person name="Cronin A."/>
            <person name="Goodhead I."/>
            <person name="Muzny D.M."/>
            <person name="Mourier T."/>
            <person name="Pain A."/>
            <person name="Lu M."/>
            <person name="Harper D."/>
            <person name="Lindsay R."/>
            <person name="Hauser H."/>
            <person name="James K.D."/>
            <person name="Quiles M."/>
            <person name="Madan Babu M."/>
            <person name="Saito T."/>
            <person name="Buchrieser C."/>
            <person name="Wardroper A."/>
            <person name="Felder M."/>
            <person name="Thangavelu M."/>
            <person name="Johnson D."/>
            <person name="Knights A."/>
            <person name="Loulseged H."/>
            <person name="Mungall K.L."/>
            <person name="Oliver K."/>
            <person name="Price C."/>
            <person name="Quail M.A."/>
            <person name="Urushihara H."/>
            <person name="Hernandez J."/>
            <person name="Rabbinowitsch E."/>
            <person name="Steffen D."/>
            <person name="Sanders M."/>
            <person name="Ma J."/>
            <person name="Kohara Y."/>
            <person name="Sharp S."/>
            <person name="Simmonds M.N."/>
            <person name="Spiegler S."/>
            <person name="Tivey A."/>
            <person name="Sugano S."/>
            <person name="White B."/>
            <person name="Walker D."/>
            <person name="Woodward J.R."/>
            <person name="Winckler T."/>
            <person name="Tanaka Y."/>
            <person name="Shaulsky G."/>
            <person name="Schleicher M."/>
            <person name="Weinstock G.M."/>
            <person name="Rosenthal A."/>
            <person name="Cox E.C."/>
            <person name="Chisholm R.L."/>
            <person name="Gibbs R.A."/>
            <person name="Loomis W.F."/>
            <person name="Platzer M."/>
            <person name="Kay R.R."/>
            <person name="Williams J.G."/>
            <person name="Dear P.H."/>
            <person name="Noegel A.A."/>
            <person name="Barrell B.G."/>
            <person name="Kuspa A."/>
        </authorList>
    </citation>
    <scope>NUCLEOTIDE SEQUENCE [LARGE SCALE GENOMIC DNA]</scope>
    <source>
        <strain>AX4</strain>
    </source>
</reference>
<sequence>MATKSLSETALVAVIGDEDVVTGFLLAGVGQKDKKKNENFLVVDSKTSQAKIETAFKSFTTRNDIAIIMITQKVADEIRYLIDEYHQVIPTILEIPSKDHPYDPKKDSVMLKVKKMTGSD</sequence>
<feature type="chain" id="PRO_0000328536" description="V-type proton ATPase subunit F">
    <location>
        <begin position="1"/>
        <end position="120"/>
    </location>
</feature>
<protein>
    <recommendedName>
        <fullName>V-type proton ATPase subunit F</fullName>
        <shortName>V-ATPase subunit F</shortName>
    </recommendedName>
    <alternativeName>
        <fullName>Vacuolar proton pump subunit F</fullName>
    </alternativeName>
</protein>
<evidence type="ECO:0000250" key="1"/>
<evidence type="ECO:0000305" key="2"/>
<name>VATF_DICDI</name>
<accession>Q55AH5</accession>
<accession>Q86HF9</accession>
<comment type="function">
    <text evidence="1">Subunit of the peripheral V1 complex of vacuolar ATPase essential for assembly or catalytic function. V-ATPase is responsible for acidifying a variety of intracellular compartments in eukaryotic cells (By similarity).</text>
</comment>
<comment type="subunit">
    <text evidence="1">V-ATPase is a heteromultimeric enzyme composed of a peripheral catalytic V1 complex (components A to H) attached to an integral membrane V0 proton pore complex (components: a, c, c', c'' and d).</text>
</comment>
<comment type="similarity">
    <text evidence="2">Belongs to the V-ATPase F subunit family.</text>
</comment>
<dbReference type="EMBL" id="AAFI02000007">
    <property type="protein sequence ID" value="EAL71520.1"/>
    <property type="molecule type" value="Genomic_DNA"/>
</dbReference>
<dbReference type="RefSeq" id="XP_645434.1">
    <property type="nucleotide sequence ID" value="XM_640342.1"/>
</dbReference>
<dbReference type="SMR" id="Q55AH5"/>
<dbReference type="FunCoup" id="Q55AH5">
    <property type="interactions" value="686"/>
</dbReference>
<dbReference type="STRING" id="44689.Q55AH5"/>
<dbReference type="PaxDb" id="44689-DDB0305002"/>
<dbReference type="EnsemblProtists" id="EAL71520">
    <property type="protein sequence ID" value="EAL71520"/>
    <property type="gene ID" value="DDB_G0271882"/>
</dbReference>
<dbReference type="GeneID" id="8618174"/>
<dbReference type="KEGG" id="ddi:DDB_G0271882"/>
<dbReference type="dictyBase" id="DDB_G0271882">
    <property type="gene designation" value="vatF"/>
</dbReference>
<dbReference type="VEuPathDB" id="AmoebaDB:DDB_G0271882"/>
<dbReference type="eggNOG" id="KOG3432">
    <property type="taxonomic scope" value="Eukaryota"/>
</dbReference>
<dbReference type="HOGENOM" id="CLU_135754_0_0_1"/>
<dbReference type="InParanoid" id="Q55AH5"/>
<dbReference type="OMA" id="IIICQHI"/>
<dbReference type="PhylomeDB" id="Q55AH5"/>
<dbReference type="Reactome" id="R-DDI-1222556">
    <property type="pathway name" value="ROS and RNS production in phagocytes"/>
</dbReference>
<dbReference type="Reactome" id="R-DDI-77387">
    <property type="pathway name" value="Insulin receptor recycling"/>
</dbReference>
<dbReference type="Reactome" id="R-DDI-917977">
    <property type="pathway name" value="Transferrin endocytosis and recycling"/>
</dbReference>
<dbReference type="Reactome" id="R-DDI-9639288">
    <property type="pathway name" value="Amino acids regulate mTORC1"/>
</dbReference>
<dbReference type="PRO" id="PR:Q55AH5"/>
<dbReference type="Proteomes" id="UP000002195">
    <property type="component" value="Chromosome 2"/>
</dbReference>
<dbReference type="GO" id="GO:0031164">
    <property type="term" value="C:contractile vacuolar membrane"/>
    <property type="evidence" value="ECO:0000304"/>
    <property type="project" value="dictyBase"/>
</dbReference>
<dbReference type="GO" id="GO:0016020">
    <property type="term" value="C:membrane"/>
    <property type="evidence" value="ECO:0000318"/>
    <property type="project" value="GO_Central"/>
</dbReference>
<dbReference type="GO" id="GO:0033180">
    <property type="term" value="C:proton-transporting V-type ATPase, V1 domain"/>
    <property type="evidence" value="ECO:0007669"/>
    <property type="project" value="InterPro"/>
</dbReference>
<dbReference type="GO" id="GO:0046961">
    <property type="term" value="F:proton-transporting ATPase activity, rotational mechanism"/>
    <property type="evidence" value="ECO:0007669"/>
    <property type="project" value="InterPro"/>
</dbReference>
<dbReference type="FunFam" id="3.40.50.10580:FF:000004">
    <property type="entry name" value="V-type proton ATPase subunit F"/>
    <property type="match status" value="1"/>
</dbReference>
<dbReference type="Gene3D" id="3.40.50.10580">
    <property type="entry name" value="ATPase, V1 complex, subunit F"/>
    <property type="match status" value="1"/>
</dbReference>
<dbReference type="InterPro" id="IPR008218">
    <property type="entry name" value="ATPase_V1-cplx_f_g_su"/>
</dbReference>
<dbReference type="InterPro" id="IPR005772">
    <property type="entry name" value="ATPase_V1-cplx_fsu_euk"/>
</dbReference>
<dbReference type="InterPro" id="IPR036906">
    <property type="entry name" value="ATPase_V1_fsu_sf"/>
</dbReference>
<dbReference type="NCBIfam" id="TIGR01101">
    <property type="entry name" value="V_ATP_synt_F"/>
    <property type="match status" value="1"/>
</dbReference>
<dbReference type="PANTHER" id="PTHR13861:SF2">
    <property type="entry name" value="V-TYPE PROTON ATPASE SUBUNIT F"/>
    <property type="match status" value="1"/>
</dbReference>
<dbReference type="PANTHER" id="PTHR13861">
    <property type="entry name" value="VACUOLAR ATP SYNTHASE SUBUNIT F"/>
    <property type="match status" value="1"/>
</dbReference>
<dbReference type="Pfam" id="PF01990">
    <property type="entry name" value="ATP-synt_F"/>
    <property type="match status" value="1"/>
</dbReference>
<dbReference type="PIRSF" id="PIRSF015945">
    <property type="entry name" value="ATPase_V1_F_euk"/>
    <property type="match status" value="1"/>
</dbReference>
<dbReference type="SUPFAM" id="SSF159468">
    <property type="entry name" value="AtpF-like"/>
    <property type="match status" value="1"/>
</dbReference>
<keyword id="KW-0375">Hydrogen ion transport</keyword>
<keyword id="KW-0406">Ion transport</keyword>
<keyword id="KW-1185">Reference proteome</keyword>
<keyword id="KW-0813">Transport</keyword>
<proteinExistence type="inferred from homology"/>
<organism>
    <name type="scientific">Dictyostelium discoideum</name>
    <name type="common">Social amoeba</name>
    <dbReference type="NCBI Taxonomy" id="44689"/>
    <lineage>
        <taxon>Eukaryota</taxon>
        <taxon>Amoebozoa</taxon>
        <taxon>Evosea</taxon>
        <taxon>Eumycetozoa</taxon>
        <taxon>Dictyostelia</taxon>
        <taxon>Dictyosteliales</taxon>
        <taxon>Dictyosteliaceae</taxon>
        <taxon>Dictyostelium</taxon>
    </lineage>
</organism>
<gene>
    <name type="primary">vatF</name>
    <name type="ORF">DDB_G0271882</name>
</gene>